<reference key="1">
    <citation type="submission" date="2004-08" db="EMBL/GenBank/DDBJ databases">
        <authorList>
            <consortium name="NIH - Xenopus Gene Collection (XGC) project"/>
        </authorList>
    </citation>
    <scope>NUCLEOTIDE SEQUENCE [LARGE SCALE MRNA]</scope>
    <source>
        <tissue>Embryo</tissue>
    </source>
</reference>
<accession>Q68FB2</accession>
<organism>
    <name type="scientific">Xenopus tropicalis</name>
    <name type="common">Western clawed frog</name>
    <name type="synonym">Silurana tropicalis</name>
    <dbReference type="NCBI Taxonomy" id="8364"/>
    <lineage>
        <taxon>Eukaryota</taxon>
        <taxon>Metazoa</taxon>
        <taxon>Chordata</taxon>
        <taxon>Craniata</taxon>
        <taxon>Vertebrata</taxon>
        <taxon>Euteleostomi</taxon>
        <taxon>Amphibia</taxon>
        <taxon>Batrachia</taxon>
        <taxon>Anura</taxon>
        <taxon>Pipoidea</taxon>
        <taxon>Pipidae</taxon>
        <taxon>Xenopodinae</taxon>
        <taxon>Xenopus</taxon>
        <taxon>Silurana</taxon>
    </lineage>
</organism>
<sequence length="315" mass="35245">MILILHPLENLKSYISSRPPLVIFMVSVSGMAIAFLTLGYFFKMKEIKSPEMTEDWNTFLLRFNNLDLCVSENETLKHFLNETTPPESTVTSGQARSSTQTPQALEDSGPINISVAITLTLDPLKPFGGYSRNITHLSSTIFGHQIGLSGRDSHEEMNITFTLPAAWNSDDCIVHGHCEQVVFTTCMTVTAASSVFPVTVQPPHCIPETYSNASLWYKIFTTARDSGTKYAQDYNPFWCYKGAVGKVYHALNPKLTVIVPEDDRSLINLHLMDTSYFLFVMVITMFCYAVIRGRPSKLRQSNSEFSPEKVALSDA</sequence>
<keyword id="KW-0472">Membrane</keyword>
<keyword id="KW-1185">Reference proteome</keyword>
<keyword id="KW-0812">Transmembrane</keyword>
<keyword id="KW-1133">Transmembrane helix</keyword>
<evidence type="ECO:0000255" key="1"/>
<evidence type="ECO:0000256" key="2">
    <source>
        <dbReference type="SAM" id="MobiDB-lite"/>
    </source>
</evidence>
<evidence type="ECO:0000305" key="3"/>
<feature type="chain" id="PRO_0000295131" description="Transmembrane protein 248">
    <location>
        <begin position="1"/>
        <end position="315"/>
    </location>
</feature>
<feature type="transmembrane region" description="Helical" evidence="1">
    <location>
        <begin position="22"/>
        <end position="42"/>
    </location>
</feature>
<feature type="transmembrane region" description="Helical" evidence="1">
    <location>
        <begin position="180"/>
        <end position="200"/>
    </location>
</feature>
<feature type="transmembrane region" description="Helical" evidence="1">
    <location>
        <begin position="271"/>
        <end position="291"/>
    </location>
</feature>
<feature type="region of interest" description="Disordered" evidence="2">
    <location>
        <begin position="82"/>
        <end position="106"/>
    </location>
</feature>
<feature type="compositionally biased region" description="Polar residues" evidence="2">
    <location>
        <begin position="82"/>
        <end position="103"/>
    </location>
</feature>
<dbReference type="EMBL" id="BC079930">
    <property type="protein sequence ID" value="AAH79930.1"/>
    <property type="molecule type" value="mRNA"/>
</dbReference>
<dbReference type="RefSeq" id="NP_001007494.1">
    <property type="nucleotide sequence ID" value="NM_001007493.1"/>
</dbReference>
<dbReference type="SMR" id="Q68FB2"/>
<dbReference type="FunCoup" id="Q68FB2">
    <property type="interactions" value="1403"/>
</dbReference>
<dbReference type="STRING" id="8364.ENSXETP00000037694"/>
<dbReference type="PaxDb" id="8364-ENSXETP00000002224"/>
<dbReference type="DNASU" id="493220"/>
<dbReference type="GeneID" id="493220"/>
<dbReference type="KEGG" id="xtr:493220"/>
<dbReference type="AGR" id="Xenbase:XB-GENE-5803741"/>
<dbReference type="CTD" id="55069"/>
<dbReference type="Xenbase" id="XB-GENE-5803741">
    <property type="gene designation" value="tmem248"/>
</dbReference>
<dbReference type="eggNOG" id="ENOG502R6D8">
    <property type="taxonomic scope" value="Eukaryota"/>
</dbReference>
<dbReference type="HOGENOM" id="CLU_080742_0_0_1"/>
<dbReference type="InParanoid" id="Q68FB2"/>
<dbReference type="OMA" id="TLFCYAI"/>
<dbReference type="OrthoDB" id="6329605at2759"/>
<dbReference type="PhylomeDB" id="Q68FB2"/>
<dbReference type="TreeFam" id="TF331542"/>
<dbReference type="Proteomes" id="UP000008143">
    <property type="component" value="Chromosome 2"/>
</dbReference>
<dbReference type="GO" id="GO:0016020">
    <property type="term" value="C:membrane"/>
    <property type="evidence" value="ECO:0007669"/>
    <property type="project" value="UniProtKB-SubCell"/>
</dbReference>
<dbReference type="InterPro" id="IPR039493">
    <property type="entry name" value="TMEM248/TMEM219"/>
</dbReference>
<dbReference type="InterPro" id="IPR039587">
    <property type="entry name" value="TMEM248/TMEM219_dom"/>
</dbReference>
<dbReference type="PANTHER" id="PTHR16002:SF5">
    <property type="entry name" value="TRANSMEMBRANE PROTEIN 248"/>
    <property type="match status" value="1"/>
</dbReference>
<dbReference type="PANTHER" id="PTHR16002">
    <property type="entry name" value="TRANSMEMBRANE PROTEIN 248-LIKE"/>
    <property type="match status" value="1"/>
</dbReference>
<dbReference type="Pfam" id="PF14940">
    <property type="entry name" value="TMEM219"/>
    <property type="match status" value="1"/>
</dbReference>
<protein>
    <recommendedName>
        <fullName>Transmembrane protein 248</fullName>
    </recommendedName>
</protein>
<proteinExistence type="evidence at transcript level"/>
<comment type="subcellular location">
    <subcellularLocation>
        <location evidence="3">Membrane</location>
        <topology evidence="3">Multi-pass membrane protein</topology>
    </subcellularLocation>
</comment>
<comment type="similarity">
    <text evidence="3">Belongs to the TMEM248 family.</text>
</comment>
<gene>
    <name type="primary">tmem248</name>
</gene>
<name>TM248_XENTR</name>